<keyword id="KW-0002">3D-structure</keyword>
<keyword id="KW-0131">Cell cycle</keyword>
<keyword id="KW-0132">Cell division</keyword>
<keyword id="KW-0963">Cytoplasm</keyword>
<keyword id="KW-0344">Guanine-nucleotide releasing factor</keyword>
<keyword id="KW-0498">Mitosis</keyword>
<keyword id="KW-0539">Nucleus</keyword>
<keyword id="KW-0597">Phosphoprotein</keyword>
<keyword id="KW-1185">Reference proteome</keyword>
<keyword id="KW-0677">Repeat</keyword>
<feature type="chain" id="PRO_0000206633" description="Regulator of chromosome condensation">
    <location>
        <begin position="1"/>
        <end position="547"/>
    </location>
</feature>
<feature type="repeat" description="RCC1 1">
    <location>
        <begin position="41"/>
        <end position="91"/>
    </location>
</feature>
<feature type="repeat" description="RCC1 2">
    <location>
        <begin position="92"/>
        <end position="143"/>
    </location>
</feature>
<feature type="repeat" description="RCC1 3">
    <location>
        <begin position="145"/>
        <end position="195"/>
    </location>
</feature>
<feature type="repeat" description="RCC1 4">
    <location>
        <begin position="197"/>
        <end position="257"/>
    </location>
</feature>
<feature type="repeat" description="RCC1 5">
    <location>
        <begin position="260"/>
        <end position="310"/>
    </location>
</feature>
<feature type="repeat" description="RCC1 6">
    <location>
        <begin position="311"/>
        <end position="362"/>
    </location>
</feature>
<feature type="repeat" description="RCC1 7">
    <location>
        <begin position="363"/>
        <end position="416"/>
    </location>
</feature>
<feature type="repeat" description="Bj1 1">
    <location>
        <begin position="417"/>
        <end position="454"/>
    </location>
</feature>
<feature type="repeat" description="Bj1 2">
    <location>
        <begin position="455"/>
        <end position="489"/>
    </location>
</feature>
<feature type="repeat" description="Bj1 3">
    <location>
        <begin position="490"/>
        <end position="519"/>
    </location>
</feature>
<feature type="region of interest" description="Disordered" evidence="1">
    <location>
        <begin position="1"/>
        <end position="24"/>
    </location>
</feature>
<feature type="region of interest" description="Disordered" evidence="1">
    <location>
        <begin position="423"/>
        <end position="547"/>
    </location>
</feature>
<feature type="compositionally biased region" description="Low complexity" evidence="1">
    <location>
        <begin position="427"/>
        <end position="436"/>
    </location>
</feature>
<feature type="compositionally biased region" description="Basic and acidic residues" evidence="1">
    <location>
        <begin position="437"/>
        <end position="464"/>
    </location>
</feature>
<feature type="compositionally biased region" description="Basic and acidic residues" evidence="1">
    <location>
        <begin position="482"/>
        <end position="499"/>
    </location>
</feature>
<feature type="compositionally biased region" description="Acidic residues" evidence="1">
    <location>
        <begin position="517"/>
        <end position="527"/>
    </location>
</feature>
<feature type="compositionally biased region" description="Basic residues" evidence="1">
    <location>
        <begin position="533"/>
        <end position="547"/>
    </location>
</feature>
<feature type="modified residue" description="Phosphothreonine" evidence="2">
    <location>
        <position position="286"/>
    </location>
</feature>
<feature type="modified residue" description="Phosphothreonine" evidence="2">
    <location>
        <position position="512"/>
    </location>
</feature>
<feature type="modified residue" description="Phosphoserine" evidence="2">
    <location>
        <position position="526"/>
    </location>
</feature>
<feature type="modified residue" description="Phosphothreonine" evidence="2">
    <location>
        <position position="531"/>
    </location>
</feature>
<feature type="sequence conflict" description="In Ref. 1; CAA41417." evidence="4" ref="1">
    <original>V</original>
    <variation>A</variation>
    <location>
        <position position="490"/>
    </location>
</feature>
<feature type="strand" evidence="5">
    <location>
        <begin position="42"/>
        <end position="49"/>
    </location>
</feature>
<feature type="strand" evidence="5">
    <location>
        <begin position="63"/>
        <end position="69"/>
    </location>
</feature>
<feature type="strand" evidence="5">
    <location>
        <begin position="74"/>
        <end position="81"/>
    </location>
</feature>
<feature type="strand" evidence="5">
    <location>
        <begin position="83"/>
        <end position="90"/>
    </location>
</feature>
<feature type="strand" evidence="5">
    <location>
        <begin position="95"/>
        <end position="99"/>
    </location>
</feature>
<feature type="strand" evidence="5">
    <location>
        <begin position="102"/>
        <end position="104"/>
    </location>
</feature>
<feature type="strand" evidence="5">
    <location>
        <begin position="115"/>
        <end position="118"/>
    </location>
</feature>
<feature type="strand" evidence="5">
    <location>
        <begin position="128"/>
        <end position="133"/>
    </location>
</feature>
<feature type="strand" evidence="5">
    <location>
        <begin position="135"/>
        <end position="142"/>
    </location>
</feature>
<feature type="strand" evidence="5">
    <location>
        <begin position="147"/>
        <end position="151"/>
    </location>
</feature>
<feature type="strand" evidence="5">
    <location>
        <begin position="156"/>
        <end position="163"/>
    </location>
</feature>
<feature type="strand" evidence="5">
    <location>
        <begin position="168"/>
        <end position="175"/>
    </location>
</feature>
<feature type="strand" evidence="5">
    <location>
        <begin position="180"/>
        <end position="185"/>
    </location>
</feature>
<feature type="strand" evidence="5">
    <location>
        <begin position="187"/>
        <end position="194"/>
    </location>
</feature>
<feature type="strand" evidence="5">
    <location>
        <begin position="199"/>
        <end position="203"/>
    </location>
</feature>
<feature type="turn" evidence="5">
    <location>
        <begin position="215"/>
        <end position="219"/>
    </location>
</feature>
<feature type="turn" evidence="5">
    <location>
        <begin position="223"/>
        <end position="229"/>
    </location>
</feature>
<feature type="strand" evidence="5">
    <location>
        <begin position="233"/>
        <end position="235"/>
    </location>
</feature>
<feature type="strand" evidence="5">
    <location>
        <begin position="243"/>
        <end position="249"/>
    </location>
</feature>
<feature type="strand" evidence="5">
    <location>
        <begin position="252"/>
        <end position="257"/>
    </location>
</feature>
<feature type="turn" evidence="5">
    <location>
        <begin position="258"/>
        <end position="260"/>
    </location>
</feature>
<feature type="strand" evidence="5">
    <location>
        <begin position="263"/>
        <end position="268"/>
    </location>
</feature>
<feature type="strand" evidence="5">
    <location>
        <begin position="282"/>
        <end position="290"/>
    </location>
</feature>
<feature type="strand" evidence="5">
    <location>
        <begin position="294"/>
        <end position="300"/>
    </location>
</feature>
<feature type="strand" evidence="5">
    <location>
        <begin position="302"/>
        <end position="309"/>
    </location>
</feature>
<feature type="strand" evidence="5">
    <location>
        <begin position="314"/>
        <end position="318"/>
    </location>
</feature>
<feature type="helix" evidence="5">
    <location>
        <begin position="321"/>
        <end position="323"/>
    </location>
</feature>
<feature type="strand" evidence="5">
    <location>
        <begin position="327"/>
        <end position="329"/>
    </location>
</feature>
<feature type="strand" evidence="5">
    <location>
        <begin position="334"/>
        <end position="339"/>
    </location>
</feature>
<feature type="strand" evidence="5">
    <location>
        <begin position="347"/>
        <end position="353"/>
    </location>
</feature>
<feature type="strand" evidence="5">
    <location>
        <begin position="356"/>
        <end position="361"/>
    </location>
</feature>
<feature type="strand" evidence="5">
    <location>
        <begin position="366"/>
        <end position="370"/>
    </location>
</feature>
<feature type="strand" evidence="5">
    <location>
        <begin position="377"/>
        <end position="382"/>
    </location>
</feature>
<feature type="strand" evidence="5">
    <location>
        <begin position="385"/>
        <end position="390"/>
    </location>
</feature>
<feature type="turn" evidence="5">
    <location>
        <begin position="394"/>
        <end position="398"/>
    </location>
</feature>
<feature type="strand" evidence="5">
    <location>
        <begin position="401"/>
        <end position="406"/>
    </location>
</feature>
<feature type="strand" evidence="5">
    <location>
        <begin position="408"/>
        <end position="416"/>
    </location>
</feature>
<sequence>MPRRKALTNNNNAGEAEQQPPKAKRARIAFHLELPKRRTVLGNVLVCGNGDVGQLGLGEDILERKRLSPVAGIPDAVDISAGGMHNLVLTKSGDIYSFGCNDEGALGRDTSEDGSESKPDLIDLPGKALCISAGDSHSACLLEDGRVFAWGSFRDSHGNMGLTIDGNKRTPIDLMEGTVCCSIASGADHLVILTTAGKVFTVGCAEQGQLGRLSERSISGEGRRGKRDLLRPTQLIITRAKPFEAIWATNYCTFMRESQTQVIWATGLNNFKQLAHETKGKEFALTPIKTELKDIRHIAGGQHHTVILTTDLKCSVVGRPEYGRLGLGDVKDVVEKPTIVKKLTEKIVSVGCGEVCSYAVTIDGKLYSWGSGVNNQLGVGDGDDELEPIVVVSKNTQGKHMLLASGGGQHAIFLVKADKQDQKENVPVKVSGSSSISKKDKTPPQDNVDKEAENVDKQEQKENLPAKASTSSKKNKTPPQDNADKEAENVDKQEQKENLPAKASTSSKKIKTPPQDDAAEEVEEESAQEPTPKKAKKPAAKRGGKKT</sequence>
<organism>
    <name type="scientific">Drosophila melanogaster</name>
    <name type="common">Fruit fly</name>
    <dbReference type="NCBI Taxonomy" id="7227"/>
    <lineage>
        <taxon>Eukaryota</taxon>
        <taxon>Metazoa</taxon>
        <taxon>Ecdysozoa</taxon>
        <taxon>Arthropoda</taxon>
        <taxon>Hexapoda</taxon>
        <taxon>Insecta</taxon>
        <taxon>Pterygota</taxon>
        <taxon>Neoptera</taxon>
        <taxon>Endopterygota</taxon>
        <taxon>Diptera</taxon>
        <taxon>Brachycera</taxon>
        <taxon>Muscomorpha</taxon>
        <taxon>Ephydroidea</taxon>
        <taxon>Drosophilidae</taxon>
        <taxon>Drosophila</taxon>
        <taxon>Sophophora</taxon>
    </lineage>
</organism>
<protein>
    <recommendedName>
        <fullName>Regulator of chromosome condensation</fullName>
    </recommendedName>
    <alternativeName>
        <fullName>Chromatin-binding protein Bj1</fullName>
    </alternativeName>
    <alternativeName>
        <fullName>Regulator of chromosome condensation 1 ortholog</fullName>
    </alternativeName>
</protein>
<accession>P25171</accession>
<accession>A4V1J1</accession>
<accession>Q9VRR5</accession>
<evidence type="ECO:0000256" key="1">
    <source>
        <dbReference type="SAM" id="MobiDB-lite"/>
    </source>
</evidence>
<evidence type="ECO:0000269" key="2">
    <source>
    </source>
</evidence>
<evidence type="ECO:0000269" key="3">
    <source>
    </source>
</evidence>
<evidence type="ECO:0000305" key="4"/>
<evidence type="ECO:0007829" key="5">
    <source>
        <dbReference type="PDB" id="3MVD"/>
    </source>
</evidence>
<proteinExistence type="evidence at protein level"/>
<reference key="1">
    <citation type="journal article" date="1991" name="EMBO J.">
        <title>The maternally expressed Drosophila gene encoding the chromatin-binding protein BJ1 is a homolog of the vertebrate gene Regulator of Chromatin Condensation, RCC1.</title>
        <authorList>
            <person name="Frasch M."/>
        </authorList>
    </citation>
    <scope>NUCLEOTIDE SEQUENCE [GENOMIC DNA]</scope>
</reference>
<reference key="2">
    <citation type="journal article" date="2000" name="Science">
        <title>The genome sequence of Drosophila melanogaster.</title>
        <authorList>
            <person name="Adams M.D."/>
            <person name="Celniker S.E."/>
            <person name="Holt R.A."/>
            <person name="Evans C.A."/>
            <person name="Gocayne J.D."/>
            <person name="Amanatides P.G."/>
            <person name="Scherer S.E."/>
            <person name="Li P.W."/>
            <person name="Hoskins R.A."/>
            <person name="Galle R.F."/>
            <person name="George R.A."/>
            <person name="Lewis S.E."/>
            <person name="Richards S."/>
            <person name="Ashburner M."/>
            <person name="Henderson S.N."/>
            <person name="Sutton G.G."/>
            <person name="Wortman J.R."/>
            <person name="Yandell M.D."/>
            <person name="Zhang Q."/>
            <person name="Chen L.X."/>
            <person name="Brandon R.C."/>
            <person name="Rogers Y.-H.C."/>
            <person name="Blazej R.G."/>
            <person name="Champe M."/>
            <person name="Pfeiffer B.D."/>
            <person name="Wan K.H."/>
            <person name="Doyle C."/>
            <person name="Baxter E.G."/>
            <person name="Helt G."/>
            <person name="Nelson C.R."/>
            <person name="Miklos G.L.G."/>
            <person name="Abril J.F."/>
            <person name="Agbayani A."/>
            <person name="An H.-J."/>
            <person name="Andrews-Pfannkoch C."/>
            <person name="Baldwin D."/>
            <person name="Ballew R.M."/>
            <person name="Basu A."/>
            <person name="Baxendale J."/>
            <person name="Bayraktaroglu L."/>
            <person name="Beasley E.M."/>
            <person name="Beeson K.Y."/>
            <person name="Benos P.V."/>
            <person name="Berman B.P."/>
            <person name="Bhandari D."/>
            <person name="Bolshakov S."/>
            <person name="Borkova D."/>
            <person name="Botchan M.R."/>
            <person name="Bouck J."/>
            <person name="Brokstein P."/>
            <person name="Brottier P."/>
            <person name="Burtis K.C."/>
            <person name="Busam D.A."/>
            <person name="Butler H."/>
            <person name="Cadieu E."/>
            <person name="Center A."/>
            <person name="Chandra I."/>
            <person name="Cherry J.M."/>
            <person name="Cawley S."/>
            <person name="Dahlke C."/>
            <person name="Davenport L.B."/>
            <person name="Davies P."/>
            <person name="de Pablos B."/>
            <person name="Delcher A."/>
            <person name="Deng Z."/>
            <person name="Mays A.D."/>
            <person name="Dew I."/>
            <person name="Dietz S.M."/>
            <person name="Dodson K."/>
            <person name="Doup L.E."/>
            <person name="Downes M."/>
            <person name="Dugan-Rocha S."/>
            <person name="Dunkov B.C."/>
            <person name="Dunn P."/>
            <person name="Durbin K.J."/>
            <person name="Evangelista C.C."/>
            <person name="Ferraz C."/>
            <person name="Ferriera S."/>
            <person name="Fleischmann W."/>
            <person name="Fosler C."/>
            <person name="Gabrielian A.E."/>
            <person name="Garg N.S."/>
            <person name="Gelbart W.M."/>
            <person name="Glasser K."/>
            <person name="Glodek A."/>
            <person name="Gong F."/>
            <person name="Gorrell J.H."/>
            <person name="Gu Z."/>
            <person name="Guan P."/>
            <person name="Harris M."/>
            <person name="Harris N.L."/>
            <person name="Harvey D.A."/>
            <person name="Heiman T.J."/>
            <person name="Hernandez J.R."/>
            <person name="Houck J."/>
            <person name="Hostin D."/>
            <person name="Houston K.A."/>
            <person name="Howland T.J."/>
            <person name="Wei M.-H."/>
            <person name="Ibegwam C."/>
            <person name="Jalali M."/>
            <person name="Kalush F."/>
            <person name="Karpen G.H."/>
            <person name="Ke Z."/>
            <person name="Kennison J.A."/>
            <person name="Ketchum K.A."/>
            <person name="Kimmel B.E."/>
            <person name="Kodira C.D."/>
            <person name="Kraft C.L."/>
            <person name="Kravitz S."/>
            <person name="Kulp D."/>
            <person name="Lai Z."/>
            <person name="Lasko P."/>
            <person name="Lei Y."/>
            <person name="Levitsky A.A."/>
            <person name="Li J.H."/>
            <person name="Li Z."/>
            <person name="Liang Y."/>
            <person name="Lin X."/>
            <person name="Liu X."/>
            <person name="Mattei B."/>
            <person name="McIntosh T.C."/>
            <person name="McLeod M.P."/>
            <person name="McPherson D."/>
            <person name="Merkulov G."/>
            <person name="Milshina N.V."/>
            <person name="Mobarry C."/>
            <person name="Morris J."/>
            <person name="Moshrefi A."/>
            <person name="Mount S.M."/>
            <person name="Moy M."/>
            <person name="Murphy B."/>
            <person name="Murphy L."/>
            <person name="Muzny D.M."/>
            <person name="Nelson D.L."/>
            <person name="Nelson D.R."/>
            <person name="Nelson K.A."/>
            <person name="Nixon K."/>
            <person name="Nusskern D.R."/>
            <person name="Pacleb J.M."/>
            <person name="Palazzolo M."/>
            <person name="Pittman G.S."/>
            <person name="Pan S."/>
            <person name="Pollard J."/>
            <person name="Puri V."/>
            <person name="Reese M.G."/>
            <person name="Reinert K."/>
            <person name="Remington K."/>
            <person name="Saunders R.D.C."/>
            <person name="Scheeler F."/>
            <person name="Shen H."/>
            <person name="Shue B.C."/>
            <person name="Siden-Kiamos I."/>
            <person name="Simpson M."/>
            <person name="Skupski M.P."/>
            <person name="Smith T.J."/>
            <person name="Spier E."/>
            <person name="Spradling A.C."/>
            <person name="Stapleton M."/>
            <person name="Strong R."/>
            <person name="Sun E."/>
            <person name="Svirskas R."/>
            <person name="Tector C."/>
            <person name="Turner R."/>
            <person name="Venter E."/>
            <person name="Wang A.H."/>
            <person name="Wang X."/>
            <person name="Wang Z.-Y."/>
            <person name="Wassarman D.A."/>
            <person name="Weinstock G.M."/>
            <person name="Weissenbach J."/>
            <person name="Williams S.M."/>
            <person name="Woodage T."/>
            <person name="Worley K.C."/>
            <person name="Wu D."/>
            <person name="Yang S."/>
            <person name="Yao Q.A."/>
            <person name="Ye J."/>
            <person name="Yeh R.-F."/>
            <person name="Zaveri J.S."/>
            <person name="Zhan M."/>
            <person name="Zhang G."/>
            <person name="Zhao Q."/>
            <person name="Zheng L."/>
            <person name="Zheng X.H."/>
            <person name="Zhong F.N."/>
            <person name="Zhong W."/>
            <person name="Zhou X."/>
            <person name="Zhu S.C."/>
            <person name="Zhu X."/>
            <person name="Smith H.O."/>
            <person name="Gibbs R.A."/>
            <person name="Myers E.W."/>
            <person name="Rubin G.M."/>
            <person name="Venter J.C."/>
        </authorList>
    </citation>
    <scope>NUCLEOTIDE SEQUENCE [LARGE SCALE GENOMIC DNA]</scope>
    <source>
        <strain>Berkeley</strain>
    </source>
</reference>
<reference key="3">
    <citation type="journal article" date="2002" name="Genome Biol.">
        <title>Annotation of the Drosophila melanogaster euchromatic genome: a systematic review.</title>
        <authorList>
            <person name="Misra S."/>
            <person name="Crosby M.A."/>
            <person name="Mungall C.J."/>
            <person name="Matthews B.B."/>
            <person name="Campbell K.S."/>
            <person name="Hradecky P."/>
            <person name="Huang Y."/>
            <person name="Kaminker J.S."/>
            <person name="Millburn G.H."/>
            <person name="Prochnik S.E."/>
            <person name="Smith C.D."/>
            <person name="Tupy J.L."/>
            <person name="Whitfield E.J."/>
            <person name="Bayraktaroglu L."/>
            <person name="Berman B.P."/>
            <person name="Bettencourt B.R."/>
            <person name="Celniker S.E."/>
            <person name="de Grey A.D.N.J."/>
            <person name="Drysdale R.A."/>
            <person name="Harris N.L."/>
            <person name="Richter J."/>
            <person name="Russo S."/>
            <person name="Schroeder A.J."/>
            <person name="Shu S.Q."/>
            <person name="Stapleton M."/>
            <person name="Yamada C."/>
            <person name="Ashburner M."/>
            <person name="Gelbart W.M."/>
            <person name="Rubin G.M."/>
            <person name="Lewis S.E."/>
        </authorList>
    </citation>
    <scope>GENOME REANNOTATION</scope>
    <source>
        <strain>Berkeley</strain>
    </source>
</reference>
<reference key="4">
    <citation type="journal article" date="2002" name="Genome Biol.">
        <title>A Drosophila full-length cDNA resource.</title>
        <authorList>
            <person name="Stapleton M."/>
            <person name="Carlson J.W."/>
            <person name="Brokstein P."/>
            <person name="Yu C."/>
            <person name="Champe M."/>
            <person name="George R.A."/>
            <person name="Guarin H."/>
            <person name="Kronmiller B."/>
            <person name="Pacleb J.M."/>
            <person name="Park S."/>
            <person name="Wan K.H."/>
            <person name="Rubin G.M."/>
            <person name="Celniker S.E."/>
        </authorList>
    </citation>
    <scope>NUCLEOTIDE SEQUENCE [LARGE SCALE MRNA]</scope>
    <source>
        <strain>Berkeley</strain>
        <tissue>Embryo</tissue>
    </source>
</reference>
<reference key="5">
    <citation type="journal article" date="1991" name="EMBO J.">
        <title>Mutation of the hamster cell cycle gene RCC1 is complemented by the homologous genes of Drosophila and S.cerevisiae.</title>
        <authorList>
            <person name="Ohtsubo M."/>
            <person name="Yoshida T."/>
            <person name="Seino H."/>
            <person name="Nishitani H."/>
            <person name="Clark K.L."/>
            <person name="Sprague G.F. Jr."/>
            <person name="Frasch M."/>
            <person name="Nishimoto T."/>
        </authorList>
    </citation>
    <scope>FUNCTION</scope>
    <scope>SUBCELLULAR LOCATION</scope>
</reference>
<reference key="6">
    <citation type="journal article" date="2002" name="Curr. Biol.">
        <title>Ran localizes around the microtubule spindle in vivo during mitosis in Drosophila embryos.</title>
        <authorList>
            <person name="Trieselmann N."/>
            <person name="Wilde A."/>
        </authorList>
    </citation>
    <scope>SUBCELLULAR LOCATION</scope>
</reference>
<reference key="7">
    <citation type="journal article" date="2008" name="J. Proteome Res.">
        <title>Phosphoproteome analysis of Drosophila melanogaster embryos.</title>
        <authorList>
            <person name="Zhai B."/>
            <person name="Villen J."/>
            <person name="Beausoleil S.A."/>
            <person name="Mintseris J."/>
            <person name="Gygi S.P."/>
        </authorList>
    </citation>
    <scope>PHOSPHORYLATION [LARGE SCALE ANALYSIS] AT THR-286; THR-512; SER-526 AND THR-531</scope>
    <scope>IDENTIFICATION BY MASS SPECTROMETRY</scope>
    <source>
        <tissue>Embryo</tissue>
    </source>
</reference>
<dbReference type="EMBL" id="X58530">
    <property type="protein sequence ID" value="CAA41417.1"/>
    <property type="molecule type" value="Genomic_DNA"/>
</dbReference>
<dbReference type="EMBL" id="AE014296">
    <property type="protein sequence ID" value="AAF50726.1"/>
    <property type="molecule type" value="Genomic_DNA"/>
</dbReference>
<dbReference type="EMBL" id="AE014296">
    <property type="protein sequence ID" value="AAF50727.1"/>
    <property type="molecule type" value="Genomic_DNA"/>
</dbReference>
<dbReference type="EMBL" id="AE014296">
    <property type="protein sequence ID" value="AAN12235.1"/>
    <property type="molecule type" value="Genomic_DNA"/>
</dbReference>
<dbReference type="EMBL" id="AY070540">
    <property type="protein sequence ID" value="AAL48011.1"/>
    <property type="molecule type" value="mRNA"/>
</dbReference>
<dbReference type="PIR" id="S15028">
    <property type="entry name" value="S15028"/>
</dbReference>
<dbReference type="RefSeq" id="NP_523943.1">
    <property type="nucleotide sequence ID" value="NM_079219.3"/>
</dbReference>
<dbReference type="RefSeq" id="NP_729118.1">
    <property type="nucleotide sequence ID" value="NM_168151.3"/>
</dbReference>
<dbReference type="RefSeq" id="NP_729119.1">
    <property type="nucleotide sequence ID" value="NM_168152.3"/>
</dbReference>
<dbReference type="PDB" id="3MVD">
    <property type="method" value="X-ray"/>
    <property type="resolution" value="2.90 A"/>
    <property type="chains" value="K/L=2-422"/>
</dbReference>
<dbReference type="PDBsum" id="3MVD"/>
<dbReference type="SMR" id="P25171"/>
<dbReference type="BioGRID" id="64129">
    <property type="interactions" value="13"/>
</dbReference>
<dbReference type="DIP" id="DIP-17766N"/>
<dbReference type="FunCoup" id="P25171">
    <property type="interactions" value="2383"/>
</dbReference>
<dbReference type="IntAct" id="P25171">
    <property type="interactions" value="47"/>
</dbReference>
<dbReference type="STRING" id="7227.FBpp0076782"/>
<dbReference type="iPTMnet" id="P25171"/>
<dbReference type="PaxDb" id="7227-FBpp0076782"/>
<dbReference type="DNASU" id="38669"/>
<dbReference type="EnsemblMetazoa" id="FBtr0077074">
    <property type="protein sequence ID" value="FBpp0076782"/>
    <property type="gene ID" value="FBgn0002638"/>
</dbReference>
<dbReference type="EnsemblMetazoa" id="FBtr0077075">
    <property type="protein sequence ID" value="FBpp0076783"/>
    <property type="gene ID" value="FBgn0002638"/>
</dbReference>
<dbReference type="EnsemblMetazoa" id="FBtr0077076">
    <property type="protein sequence ID" value="FBpp0076784"/>
    <property type="gene ID" value="FBgn0002638"/>
</dbReference>
<dbReference type="GeneID" id="38669"/>
<dbReference type="KEGG" id="dme:Dmel_CG10480"/>
<dbReference type="AGR" id="FB:FBgn0002638"/>
<dbReference type="CTD" id="1104"/>
<dbReference type="FlyBase" id="FBgn0002638">
    <property type="gene designation" value="Rcc1"/>
</dbReference>
<dbReference type="VEuPathDB" id="VectorBase:FBgn0002638"/>
<dbReference type="eggNOG" id="KOG1426">
    <property type="taxonomic scope" value="Eukaryota"/>
</dbReference>
<dbReference type="GeneTree" id="ENSGT00940000174254"/>
<dbReference type="HOGENOM" id="CLU_005210_6_1_1"/>
<dbReference type="InParanoid" id="P25171"/>
<dbReference type="OMA" id="IFVWGTG"/>
<dbReference type="OrthoDB" id="61110at2759"/>
<dbReference type="PhylomeDB" id="P25171"/>
<dbReference type="Reactome" id="R-DME-9615933">
    <property type="pathway name" value="Postmitotic nuclear pore complex (NPC) reformation"/>
</dbReference>
<dbReference type="SignaLink" id="P25171"/>
<dbReference type="BioGRID-ORCS" id="38669">
    <property type="hits" value="0 hits in 1 CRISPR screen"/>
</dbReference>
<dbReference type="ChiTaRS" id="Rcc1">
    <property type="organism name" value="fly"/>
</dbReference>
<dbReference type="EvolutionaryTrace" id="P25171"/>
<dbReference type="GenomeRNAi" id="38669"/>
<dbReference type="PRO" id="PR:P25171"/>
<dbReference type="Proteomes" id="UP000000803">
    <property type="component" value="Chromosome 3L"/>
</dbReference>
<dbReference type="Bgee" id="FBgn0002638">
    <property type="expression patterns" value="Expressed in cleaving embryo and 148 other cell types or tissues"/>
</dbReference>
<dbReference type="GO" id="GO:0000793">
    <property type="term" value="C:condensed chromosome"/>
    <property type="evidence" value="ECO:0000314"/>
    <property type="project" value="FlyBase"/>
</dbReference>
<dbReference type="GO" id="GO:0005737">
    <property type="term" value="C:cytoplasm"/>
    <property type="evidence" value="ECO:0000318"/>
    <property type="project" value="GO_Central"/>
</dbReference>
<dbReference type="GO" id="GO:0005634">
    <property type="term" value="C:nucleus"/>
    <property type="evidence" value="ECO:0000314"/>
    <property type="project" value="UniProtKB"/>
</dbReference>
<dbReference type="GO" id="GO:0003682">
    <property type="term" value="F:chromatin binding"/>
    <property type="evidence" value="ECO:0000314"/>
    <property type="project" value="UniProtKB"/>
</dbReference>
<dbReference type="GO" id="GO:0005085">
    <property type="term" value="F:guanyl-nucleotide exchange factor activity"/>
    <property type="evidence" value="ECO:0000250"/>
    <property type="project" value="FlyBase"/>
</dbReference>
<dbReference type="GO" id="GO:0051301">
    <property type="term" value="P:cell division"/>
    <property type="evidence" value="ECO:0007669"/>
    <property type="project" value="UniProtKB-KW"/>
</dbReference>
<dbReference type="GO" id="GO:0007417">
    <property type="term" value="P:central nervous system development"/>
    <property type="evidence" value="ECO:0000314"/>
    <property type="project" value="UniProtKB"/>
</dbReference>
<dbReference type="GO" id="GO:0006607">
    <property type="term" value="P:NLS-bearing protein import into nucleus"/>
    <property type="evidence" value="ECO:0000315"/>
    <property type="project" value="FlyBase"/>
</dbReference>
<dbReference type="GO" id="GO:0007346">
    <property type="term" value="P:regulation of mitotic cell cycle"/>
    <property type="evidence" value="ECO:0000314"/>
    <property type="project" value="UniProtKB"/>
</dbReference>
<dbReference type="GO" id="GO:1901673">
    <property type="term" value="P:regulation of mitotic spindle assembly"/>
    <property type="evidence" value="ECO:0000318"/>
    <property type="project" value="GO_Central"/>
</dbReference>
<dbReference type="GO" id="GO:0050767">
    <property type="term" value="P:regulation of neurogenesis"/>
    <property type="evidence" value="ECO:0000315"/>
    <property type="project" value="FlyBase"/>
</dbReference>
<dbReference type="GO" id="GO:0046822">
    <property type="term" value="P:regulation of nucleocytoplasmic transport"/>
    <property type="evidence" value="ECO:0000315"/>
    <property type="project" value="FlyBase"/>
</dbReference>
<dbReference type="GO" id="GO:0007419">
    <property type="term" value="P:ventral cord development"/>
    <property type="evidence" value="ECO:0007001"/>
    <property type="project" value="FlyBase"/>
</dbReference>
<dbReference type="FunFam" id="2.130.10.30:FF:000053">
    <property type="entry name" value="Regulator of chromosome condensation"/>
    <property type="match status" value="1"/>
</dbReference>
<dbReference type="Gene3D" id="2.130.10.30">
    <property type="entry name" value="Regulator of chromosome condensation 1/beta-lactamase-inhibitor protein II"/>
    <property type="match status" value="1"/>
</dbReference>
<dbReference type="InterPro" id="IPR051553">
    <property type="entry name" value="Ran_GTPase-activating"/>
</dbReference>
<dbReference type="InterPro" id="IPR009091">
    <property type="entry name" value="RCC1/BLIP-II"/>
</dbReference>
<dbReference type="InterPro" id="IPR000408">
    <property type="entry name" value="Reg_chr_condens"/>
</dbReference>
<dbReference type="PANTHER" id="PTHR45982">
    <property type="entry name" value="REGULATOR OF CHROMOSOME CONDENSATION"/>
    <property type="match status" value="1"/>
</dbReference>
<dbReference type="PANTHER" id="PTHR45982:SF1">
    <property type="entry name" value="REGULATOR OF CHROMOSOME CONDENSATION"/>
    <property type="match status" value="1"/>
</dbReference>
<dbReference type="Pfam" id="PF25390">
    <property type="entry name" value="WD40_RLD"/>
    <property type="match status" value="1"/>
</dbReference>
<dbReference type="PRINTS" id="PR00633">
    <property type="entry name" value="RCCNDNSATION"/>
</dbReference>
<dbReference type="SUPFAM" id="SSF50985">
    <property type="entry name" value="RCC1/BLIP-II"/>
    <property type="match status" value="1"/>
</dbReference>
<dbReference type="PROSITE" id="PS00625">
    <property type="entry name" value="RCC1_1"/>
    <property type="match status" value="1"/>
</dbReference>
<dbReference type="PROSITE" id="PS00626">
    <property type="entry name" value="RCC1_2"/>
    <property type="match status" value="2"/>
</dbReference>
<dbReference type="PROSITE" id="PS50012">
    <property type="entry name" value="RCC1_3"/>
    <property type="match status" value="6"/>
</dbReference>
<gene>
    <name type="primary">Rcc1</name>
    <name type="synonym">Bj1</name>
    <name type="ORF">CG10480</name>
</gene>
<name>RCC1_DROME</name>
<comment type="function">
    <text evidence="3">Promotes the exchange of Ran-bound GDP by GTP. Involved in the regulation of onset of chromosome condensation in the S phase. Binds to chromatin.</text>
</comment>
<comment type="subcellular location">
    <subcellularLocation>
        <location>Nucleus</location>
    </subcellularLocation>
    <subcellularLocation>
        <location>Cytoplasm</location>
    </subcellularLocation>
    <text>Becomes dispersed throughout the cytoplasm during mitosis. Is associated with chromatin throughout mitosis.</text>
</comment>